<feature type="chain" id="PRO_0000124438" description="Small ribosomal subunit protein uS7c">
    <location>
        <begin position="1"/>
        <end position="155"/>
    </location>
</feature>
<keyword id="KW-0150">Chloroplast</keyword>
<keyword id="KW-0934">Plastid</keyword>
<keyword id="KW-0687">Ribonucleoprotein</keyword>
<keyword id="KW-0689">Ribosomal protein</keyword>
<keyword id="KW-0694">RNA-binding</keyword>
<keyword id="KW-0699">rRNA-binding</keyword>
<organism>
    <name type="scientific">Canella winterana</name>
    <name type="common">Wild cinnamon</name>
    <name type="synonym">Laurus winterana</name>
    <dbReference type="NCBI Taxonomy" id="3426"/>
    <lineage>
        <taxon>Eukaryota</taxon>
        <taxon>Viridiplantae</taxon>
        <taxon>Streptophyta</taxon>
        <taxon>Embryophyta</taxon>
        <taxon>Tracheophyta</taxon>
        <taxon>Spermatophyta</taxon>
        <taxon>Magnoliopsida</taxon>
        <taxon>Magnoliidae</taxon>
        <taxon>Canellales</taxon>
        <taxon>Canellaceae</taxon>
        <taxon>Canella</taxon>
    </lineage>
</organism>
<comment type="function">
    <text evidence="1">One of the primary rRNA binding proteins, it binds directly to 16S rRNA where it nucleates assembly of the head domain of the 30S subunit.</text>
</comment>
<comment type="subunit">
    <text>Part of the 30S ribosomal subunit.</text>
</comment>
<comment type="subcellular location">
    <subcellularLocation>
        <location>Plastid</location>
        <location>Chloroplast</location>
    </subcellularLocation>
</comment>
<comment type="similarity">
    <text evidence="2">Belongs to the universal ribosomal protein uS7 family.</text>
</comment>
<proteinExistence type="inferred from homology"/>
<dbReference type="EMBL" id="AY237133">
    <property type="protein sequence ID" value="AAQ64536.1"/>
    <property type="molecule type" value="Genomic_DNA"/>
</dbReference>
<dbReference type="SMR" id="Q6EMA4"/>
<dbReference type="GO" id="GO:0009507">
    <property type="term" value="C:chloroplast"/>
    <property type="evidence" value="ECO:0007669"/>
    <property type="project" value="UniProtKB-SubCell"/>
</dbReference>
<dbReference type="GO" id="GO:0015935">
    <property type="term" value="C:small ribosomal subunit"/>
    <property type="evidence" value="ECO:0007669"/>
    <property type="project" value="InterPro"/>
</dbReference>
<dbReference type="GO" id="GO:0019843">
    <property type="term" value="F:rRNA binding"/>
    <property type="evidence" value="ECO:0007669"/>
    <property type="project" value="UniProtKB-UniRule"/>
</dbReference>
<dbReference type="GO" id="GO:0003735">
    <property type="term" value="F:structural constituent of ribosome"/>
    <property type="evidence" value="ECO:0007669"/>
    <property type="project" value="InterPro"/>
</dbReference>
<dbReference type="GO" id="GO:0006412">
    <property type="term" value="P:translation"/>
    <property type="evidence" value="ECO:0007669"/>
    <property type="project" value="UniProtKB-UniRule"/>
</dbReference>
<dbReference type="CDD" id="cd14871">
    <property type="entry name" value="uS7_Chloroplast"/>
    <property type="match status" value="1"/>
</dbReference>
<dbReference type="FunFam" id="1.10.455.10:FF:000001">
    <property type="entry name" value="30S ribosomal protein S7"/>
    <property type="match status" value="1"/>
</dbReference>
<dbReference type="Gene3D" id="1.10.455.10">
    <property type="entry name" value="Ribosomal protein S7 domain"/>
    <property type="match status" value="1"/>
</dbReference>
<dbReference type="HAMAP" id="MF_00480_B">
    <property type="entry name" value="Ribosomal_uS7_B"/>
    <property type="match status" value="1"/>
</dbReference>
<dbReference type="InterPro" id="IPR000235">
    <property type="entry name" value="Ribosomal_uS7"/>
</dbReference>
<dbReference type="InterPro" id="IPR005717">
    <property type="entry name" value="Ribosomal_uS7_bac/org-type"/>
</dbReference>
<dbReference type="InterPro" id="IPR020606">
    <property type="entry name" value="Ribosomal_uS7_CS"/>
</dbReference>
<dbReference type="InterPro" id="IPR023798">
    <property type="entry name" value="Ribosomal_uS7_dom"/>
</dbReference>
<dbReference type="InterPro" id="IPR036823">
    <property type="entry name" value="Ribosomal_uS7_dom_sf"/>
</dbReference>
<dbReference type="NCBIfam" id="TIGR01029">
    <property type="entry name" value="rpsG_bact"/>
    <property type="match status" value="1"/>
</dbReference>
<dbReference type="PANTHER" id="PTHR11205">
    <property type="entry name" value="RIBOSOMAL PROTEIN S7"/>
    <property type="match status" value="1"/>
</dbReference>
<dbReference type="Pfam" id="PF00177">
    <property type="entry name" value="Ribosomal_S7"/>
    <property type="match status" value="1"/>
</dbReference>
<dbReference type="PIRSF" id="PIRSF002122">
    <property type="entry name" value="RPS7p_RPS7a_RPS5e_RPS7o"/>
    <property type="match status" value="1"/>
</dbReference>
<dbReference type="SUPFAM" id="SSF47973">
    <property type="entry name" value="Ribosomal protein S7"/>
    <property type="match status" value="1"/>
</dbReference>
<dbReference type="PROSITE" id="PS00052">
    <property type="entry name" value="RIBOSOMAL_S7"/>
    <property type="match status" value="1"/>
</dbReference>
<reference key="1">
    <citation type="submission" date="2003-02" db="EMBL/GenBank/DDBJ databases">
        <title>Parsing out signal and noise for seed-plant phylogenetic inference.</title>
        <authorList>
            <person name="Graham S.W."/>
            <person name="Rai H.S."/>
            <person name="Ikegami K."/>
            <person name="Reeves P.A."/>
            <person name="Olmstead R.G."/>
        </authorList>
    </citation>
    <scope>NUCLEOTIDE SEQUENCE [GENOMIC DNA]</scope>
</reference>
<sequence length="155" mass="17359">MSRRGTAEEKTAKSDPIYRNRLVNMLVNRILKHGKKSLAYQIIYRAVKKIQQKTETNPLSVLRQAIRGVTPDIAVKARRVGGSTHQVPIEIGSTQGKALAIRWLLGASRKRPGRNMAFKLSSELVDAAKGSGDSIRKKEETHRMAEANRAFAHFR</sequence>
<protein>
    <recommendedName>
        <fullName evidence="2">Small ribosomal subunit protein uS7c</fullName>
    </recommendedName>
    <alternativeName>
        <fullName>30S ribosomal protein S7, chloroplastic</fullName>
    </alternativeName>
</protein>
<accession>Q6EMA4</accession>
<evidence type="ECO:0000250" key="1"/>
<evidence type="ECO:0000305" key="2"/>
<gene>
    <name type="primary">rps7</name>
</gene>
<geneLocation type="chloroplast"/>
<name>RR7_CANWI</name>